<comment type="function">
    <text evidence="1 2">DNA ligase that catalyzes the formation of phosphodiester linkages between 5'-phosphoryl and 3'-hydroxyl groups in double-stranded DNA using NAD as a coenzyme and as the energy source for the reaction. It is essential for DNA replication and repair of damaged DNA.</text>
</comment>
<comment type="catalytic activity">
    <reaction evidence="1 3">
        <text>NAD(+) + (deoxyribonucleotide)n-3'-hydroxyl + 5'-phospho-(deoxyribonucleotide)m = (deoxyribonucleotide)n+m + AMP + beta-nicotinamide D-nucleotide.</text>
        <dbReference type="EC" id="6.5.1.2"/>
    </reaction>
</comment>
<comment type="cofactor">
    <cofactor evidence="2 3">
        <name>Mg(2+)</name>
        <dbReference type="ChEBI" id="CHEBI:18420"/>
    </cofactor>
</comment>
<comment type="activity regulation">
    <text evidence="2">Inhibited by pyridochromanone.</text>
</comment>
<comment type="biophysicochemical properties">
    <kinetics>
        <KM evidence="2">1.3 uM for NAD(+)</KM>
    </kinetics>
</comment>
<comment type="subunit">
    <text evidence="2 3">Monomer.</text>
</comment>
<comment type="similarity">
    <text evidence="1">Belongs to the NAD-dependent DNA ligase family. LigA subfamily.</text>
</comment>
<proteinExistence type="evidence at protein level"/>
<name>DNLJ_MYCTU</name>
<organism>
    <name type="scientific">Mycobacterium tuberculosis (strain ATCC 25618 / H37Rv)</name>
    <dbReference type="NCBI Taxonomy" id="83332"/>
    <lineage>
        <taxon>Bacteria</taxon>
        <taxon>Bacillati</taxon>
        <taxon>Actinomycetota</taxon>
        <taxon>Actinomycetes</taxon>
        <taxon>Mycobacteriales</taxon>
        <taxon>Mycobacteriaceae</taxon>
        <taxon>Mycobacterium</taxon>
        <taxon>Mycobacterium tuberculosis complex</taxon>
    </lineage>
</organism>
<keyword id="KW-0002">3D-structure</keyword>
<keyword id="KW-0227">DNA damage</keyword>
<keyword id="KW-0234">DNA repair</keyword>
<keyword id="KW-0235">DNA replication</keyword>
<keyword id="KW-0436">Ligase</keyword>
<keyword id="KW-0460">Magnesium</keyword>
<keyword id="KW-0479">Metal-binding</keyword>
<keyword id="KW-0520">NAD</keyword>
<keyword id="KW-1185">Reference proteome</keyword>
<keyword id="KW-0862">Zinc</keyword>
<dbReference type="EC" id="6.5.1.2" evidence="1"/>
<dbReference type="EMBL" id="AL123456">
    <property type="protein sequence ID" value="CCP45820.1"/>
    <property type="molecule type" value="Genomic_DNA"/>
</dbReference>
<dbReference type="PIR" id="A70857">
    <property type="entry name" value="A70857"/>
</dbReference>
<dbReference type="RefSeq" id="NP_217530.1">
    <property type="nucleotide sequence ID" value="NC_000962.3"/>
</dbReference>
<dbReference type="RefSeq" id="WP_003415263.1">
    <property type="nucleotide sequence ID" value="NZ_NVQJ01000041.1"/>
</dbReference>
<dbReference type="PDB" id="1ZAU">
    <property type="method" value="X-ray"/>
    <property type="resolution" value="3.15 A"/>
    <property type="chains" value="A=1-328"/>
</dbReference>
<dbReference type="PDB" id="3SGI">
    <property type="method" value="X-ray"/>
    <property type="resolution" value="3.50 A"/>
    <property type="chains" value="A=2-605"/>
</dbReference>
<dbReference type="PDB" id="6KDU">
    <property type="method" value="X-ray"/>
    <property type="resolution" value="2.20 A"/>
    <property type="chains" value="A=8-328"/>
</dbReference>
<dbReference type="PDB" id="6KJM">
    <property type="method" value="X-ray"/>
    <property type="resolution" value="2.20 A"/>
    <property type="chains" value="A=1-328"/>
</dbReference>
<dbReference type="PDB" id="6KKV">
    <property type="method" value="X-ray"/>
    <property type="resolution" value="2.56 A"/>
    <property type="chains" value="A=8-328"/>
</dbReference>
<dbReference type="PDB" id="6KRH">
    <property type="method" value="X-ray"/>
    <property type="resolution" value="2.60 A"/>
    <property type="chains" value="A=8-328"/>
</dbReference>
<dbReference type="PDB" id="6KSC">
    <property type="method" value="X-ray"/>
    <property type="resolution" value="2.40 A"/>
    <property type="chains" value="A=8-328"/>
</dbReference>
<dbReference type="PDB" id="6KSD">
    <property type="method" value="X-ray"/>
    <property type="resolution" value="2.50 A"/>
    <property type="chains" value="A=8-328"/>
</dbReference>
<dbReference type="PDB" id="6LW8">
    <property type="method" value="X-ray"/>
    <property type="resolution" value="2.40 A"/>
    <property type="chains" value="A=1-328"/>
</dbReference>
<dbReference type="PDB" id="7K72">
    <property type="method" value="X-ray"/>
    <property type="resolution" value="2.05 A"/>
    <property type="chains" value="A/B/C/D=1-328"/>
</dbReference>
<dbReference type="PDBsum" id="1ZAU"/>
<dbReference type="PDBsum" id="3SGI"/>
<dbReference type="PDBsum" id="6KDU"/>
<dbReference type="PDBsum" id="6KJM"/>
<dbReference type="PDBsum" id="6KKV"/>
<dbReference type="PDBsum" id="6KRH"/>
<dbReference type="PDBsum" id="6KSC"/>
<dbReference type="PDBsum" id="6KSD"/>
<dbReference type="PDBsum" id="6LW8"/>
<dbReference type="PDBsum" id="7K72"/>
<dbReference type="SASBDB" id="P9WNV1"/>
<dbReference type="SMR" id="P9WNV1"/>
<dbReference type="FunCoup" id="P9WNV1">
    <property type="interactions" value="52"/>
</dbReference>
<dbReference type="STRING" id="83332.Rv3014c"/>
<dbReference type="BindingDB" id="P9WNV1"/>
<dbReference type="ChEMBL" id="CHEMBL2259249"/>
<dbReference type="PaxDb" id="83332-Rv3014c"/>
<dbReference type="GeneID" id="887354"/>
<dbReference type="KEGG" id="mtu:Rv3014c"/>
<dbReference type="KEGG" id="mtv:RVBD_3014c"/>
<dbReference type="TubercuList" id="Rv3014c"/>
<dbReference type="eggNOG" id="COG0272">
    <property type="taxonomic scope" value="Bacteria"/>
</dbReference>
<dbReference type="InParanoid" id="P9WNV1"/>
<dbReference type="OrthoDB" id="9759736at2"/>
<dbReference type="PhylomeDB" id="P9WNV1"/>
<dbReference type="BRENDA" id="6.5.1.2">
    <property type="organism ID" value="3445"/>
</dbReference>
<dbReference type="SABIO-RK" id="P9WNV1"/>
<dbReference type="EvolutionaryTrace" id="P9WNV1"/>
<dbReference type="Proteomes" id="UP000001584">
    <property type="component" value="Chromosome"/>
</dbReference>
<dbReference type="GO" id="GO:0005829">
    <property type="term" value="C:cytosol"/>
    <property type="evidence" value="ECO:0007005"/>
    <property type="project" value="MTBBASE"/>
</dbReference>
<dbReference type="GO" id="GO:0009274">
    <property type="term" value="C:peptidoglycan-based cell wall"/>
    <property type="evidence" value="ECO:0007005"/>
    <property type="project" value="MTBBASE"/>
</dbReference>
<dbReference type="GO" id="GO:0005886">
    <property type="term" value="C:plasma membrane"/>
    <property type="evidence" value="ECO:0007005"/>
    <property type="project" value="MTBBASE"/>
</dbReference>
<dbReference type="GO" id="GO:0003911">
    <property type="term" value="F:DNA ligase (NAD+) activity"/>
    <property type="evidence" value="ECO:0000314"/>
    <property type="project" value="MTBBASE"/>
</dbReference>
<dbReference type="GO" id="GO:0000287">
    <property type="term" value="F:magnesium ion binding"/>
    <property type="evidence" value="ECO:0000314"/>
    <property type="project" value="MTBBASE"/>
</dbReference>
<dbReference type="GO" id="GO:0006281">
    <property type="term" value="P:DNA repair"/>
    <property type="evidence" value="ECO:0007669"/>
    <property type="project" value="UniProtKB-KW"/>
</dbReference>
<dbReference type="GO" id="GO:0006260">
    <property type="term" value="P:DNA replication"/>
    <property type="evidence" value="ECO:0007669"/>
    <property type="project" value="UniProtKB-KW"/>
</dbReference>
<dbReference type="CDD" id="cd17748">
    <property type="entry name" value="BRCT_DNA_ligase_like"/>
    <property type="match status" value="1"/>
</dbReference>
<dbReference type="CDD" id="cd00114">
    <property type="entry name" value="LIGANc"/>
    <property type="match status" value="1"/>
</dbReference>
<dbReference type="FunFam" id="1.10.150.20:FF:000006">
    <property type="entry name" value="DNA ligase"/>
    <property type="match status" value="1"/>
</dbReference>
<dbReference type="FunFam" id="1.10.150.20:FF:000100">
    <property type="entry name" value="DNA ligase"/>
    <property type="match status" value="1"/>
</dbReference>
<dbReference type="FunFam" id="1.10.287.610:FF:000002">
    <property type="entry name" value="DNA ligase"/>
    <property type="match status" value="1"/>
</dbReference>
<dbReference type="FunFam" id="2.40.50.140:FF:000012">
    <property type="entry name" value="DNA ligase"/>
    <property type="match status" value="1"/>
</dbReference>
<dbReference type="FunFam" id="3.30.470.30:FF:000001">
    <property type="entry name" value="DNA ligase"/>
    <property type="match status" value="1"/>
</dbReference>
<dbReference type="FunFam" id="3.40.50.10190:FF:000054">
    <property type="entry name" value="DNA ligase"/>
    <property type="match status" value="1"/>
</dbReference>
<dbReference type="Gene3D" id="6.20.10.30">
    <property type="match status" value="1"/>
</dbReference>
<dbReference type="Gene3D" id="1.10.150.20">
    <property type="entry name" value="5' to 3' exonuclease, C-terminal subdomain"/>
    <property type="match status" value="2"/>
</dbReference>
<dbReference type="Gene3D" id="3.40.50.10190">
    <property type="entry name" value="BRCT domain"/>
    <property type="match status" value="1"/>
</dbReference>
<dbReference type="Gene3D" id="3.30.470.30">
    <property type="entry name" value="DNA ligase/mRNA capping enzyme"/>
    <property type="match status" value="1"/>
</dbReference>
<dbReference type="Gene3D" id="1.10.287.610">
    <property type="entry name" value="Helix hairpin bin"/>
    <property type="match status" value="1"/>
</dbReference>
<dbReference type="Gene3D" id="2.40.50.140">
    <property type="entry name" value="Nucleic acid-binding proteins"/>
    <property type="match status" value="1"/>
</dbReference>
<dbReference type="HAMAP" id="MF_01588">
    <property type="entry name" value="DNA_ligase_A"/>
    <property type="match status" value="1"/>
</dbReference>
<dbReference type="InterPro" id="IPR001357">
    <property type="entry name" value="BRCT_dom"/>
</dbReference>
<dbReference type="InterPro" id="IPR036420">
    <property type="entry name" value="BRCT_dom_sf"/>
</dbReference>
<dbReference type="InterPro" id="IPR041663">
    <property type="entry name" value="DisA/LigA_HHH"/>
</dbReference>
<dbReference type="InterPro" id="IPR001679">
    <property type="entry name" value="DNA_ligase"/>
</dbReference>
<dbReference type="InterPro" id="IPR018239">
    <property type="entry name" value="DNA_ligase_AS"/>
</dbReference>
<dbReference type="InterPro" id="IPR033136">
    <property type="entry name" value="DNA_ligase_CS"/>
</dbReference>
<dbReference type="InterPro" id="IPR013839">
    <property type="entry name" value="DNAligase_adenylation"/>
</dbReference>
<dbReference type="InterPro" id="IPR013840">
    <property type="entry name" value="DNAligase_N"/>
</dbReference>
<dbReference type="InterPro" id="IPR012340">
    <property type="entry name" value="NA-bd_OB-fold"/>
</dbReference>
<dbReference type="InterPro" id="IPR004150">
    <property type="entry name" value="NAD_DNA_ligase_OB"/>
</dbReference>
<dbReference type="InterPro" id="IPR010994">
    <property type="entry name" value="RuvA_2-like"/>
</dbReference>
<dbReference type="InterPro" id="IPR004149">
    <property type="entry name" value="Znf_DNAligase_C4"/>
</dbReference>
<dbReference type="NCBIfam" id="TIGR00575">
    <property type="entry name" value="dnlj"/>
    <property type="match status" value="1"/>
</dbReference>
<dbReference type="NCBIfam" id="NF005932">
    <property type="entry name" value="PRK07956.1"/>
    <property type="match status" value="1"/>
</dbReference>
<dbReference type="PANTHER" id="PTHR23389">
    <property type="entry name" value="CHROMOSOME TRANSMISSION FIDELITY FACTOR 18"/>
    <property type="match status" value="1"/>
</dbReference>
<dbReference type="PANTHER" id="PTHR23389:SF9">
    <property type="entry name" value="DNA LIGASE"/>
    <property type="match status" value="1"/>
</dbReference>
<dbReference type="Pfam" id="PF00533">
    <property type="entry name" value="BRCT"/>
    <property type="match status" value="1"/>
</dbReference>
<dbReference type="Pfam" id="PF01653">
    <property type="entry name" value="DNA_ligase_aden"/>
    <property type="match status" value="1"/>
</dbReference>
<dbReference type="Pfam" id="PF03120">
    <property type="entry name" value="DNA_ligase_OB"/>
    <property type="match status" value="1"/>
</dbReference>
<dbReference type="Pfam" id="PF03119">
    <property type="entry name" value="DNA_ligase_ZBD"/>
    <property type="match status" value="1"/>
</dbReference>
<dbReference type="Pfam" id="PF12826">
    <property type="entry name" value="HHH_2"/>
    <property type="match status" value="1"/>
</dbReference>
<dbReference type="Pfam" id="PF22745">
    <property type="entry name" value="Nlig-Ia"/>
    <property type="match status" value="1"/>
</dbReference>
<dbReference type="PIRSF" id="PIRSF001604">
    <property type="entry name" value="LigA"/>
    <property type="match status" value="1"/>
</dbReference>
<dbReference type="SMART" id="SM00292">
    <property type="entry name" value="BRCT"/>
    <property type="match status" value="1"/>
</dbReference>
<dbReference type="SMART" id="SM00532">
    <property type="entry name" value="LIGANc"/>
    <property type="match status" value="1"/>
</dbReference>
<dbReference type="SUPFAM" id="SSF52113">
    <property type="entry name" value="BRCT domain"/>
    <property type="match status" value="1"/>
</dbReference>
<dbReference type="SUPFAM" id="SSF56091">
    <property type="entry name" value="DNA ligase/mRNA capping enzyme, catalytic domain"/>
    <property type="match status" value="1"/>
</dbReference>
<dbReference type="SUPFAM" id="SSF50249">
    <property type="entry name" value="Nucleic acid-binding proteins"/>
    <property type="match status" value="1"/>
</dbReference>
<dbReference type="SUPFAM" id="SSF47781">
    <property type="entry name" value="RuvA domain 2-like"/>
    <property type="match status" value="1"/>
</dbReference>
<dbReference type="PROSITE" id="PS50172">
    <property type="entry name" value="BRCT"/>
    <property type="match status" value="1"/>
</dbReference>
<dbReference type="PROSITE" id="PS01055">
    <property type="entry name" value="DNA_LIGASE_N1"/>
    <property type="match status" value="1"/>
</dbReference>
<dbReference type="PROSITE" id="PS01056">
    <property type="entry name" value="DNA_LIGASE_N2"/>
    <property type="match status" value="1"/>
</dbReference>
<evidence type="ECO:0000255" key="1">
    <source>
        <dbReference type="HAMAP-Rule" id="MF_01588"/>
    </source>
</evidence>
<evidence type="ECO:0000269" key="2">
    <source>
    </source>
</evidence>
<evidence type="ECO:0000269" key="3">
    <source>
    </source>
</evidence>
<evidence type="ECO:0000305" key="4">
    <source>
    </source>
</evidence>
<evidence type="ECO:0007829" key="5">
    <source>
        <dbReference type="PDB" id="1ZAU"/>
    </source>
</evidence>
<evidence type="ECO:0007829" key="6">
    <source>
        <dbReference type="PDB" id="3SGI"/>
    </source>
</evidence>
<evidence type="ECO:0007829" key="7">
    <source>
        <dbReference type="PDB" id="6KSD"/>
    </source>
</evidence>
<evidence type="ECO:0007829" key="8">
    <source>
        <dbReference type="PDB" id="7K72"/>
    </source>
</evidence>
<reference key="1">
    <citation type="journal article" date="1998" name="Nature">
        <title>Deciphering the biology of Mycobacterium tuberculosis from the complete genome sequence.</title>
        <authorList>
            <person name="Cole S.T."/>
            <person name="Brosch R."/>
            <person name="Parkhill J."/>
            <person name="Garnier T."/>
            <person name="Churcher C.M."/>
            <person name="Harris D.E."/>
            <person name="Gordon S.V."/>
            <person name="Eiglmeier K."/>
            <person name="Gas S."/>
            <person name="Barry C.E. III"/>
            <person name="Tekaia F."/>
            <person name="Badcock K."/>
            <person name="Basham D."/>
            <person name="Brown D."/>
            <person name="Chillingworth T."/>
            <person name="Connor R."/>
            <person name="Davies R.M."/>
            <person name="Devlin K."/>
            <person name="Feltwell T."/>
            <person name="Gentles S."/>
            <person name="Hamlin N."/>
            <person name="Holroyd S."/>
            <person name="Hornsby T."/>
            <person name="Jagels K."/>
            <person name="Krogh A."/>
            <person name="McLean J."/>
            <person name="Moule S."/>
            <person name="Murphy L.D."/>
            <person name="Oliver S."/>
            <person name="Osborne J."/>
            <person name="Quail M.A."/>
            <person name="Rajandream M.A."/>
            <person name="Rogers J."/>
            <person name="Rutter S."/>
            <person name="Seeger K."/>
            <person name="Skelton S."/>
            <person name="Squares S."/>
            <person name="Squares R."/>
            <person name="Sulston J.E."/>
            <person name="Taylor K."/>
            <person name="Whitehead S."/>
            <person name="Barrell B.G."/>
        </authorList>
    </citation>
    <scope>NUCLEOTIDE SEQUENCE [LARGE SCALE GENOMIC DNA]</scope>
    <source>
        <strain>ATCC 25618 / H37Rv</strain>
    </source>
</reference>
<reference key="2">
    <citation type="journal article" date="2004" name="J. Biol. Chem.">
        <title>Biochemical and genetic analysis of the four DNA ligases of mycobacteria.</title>
        <authorList>
            <person name="Gong C."/>
            <person name="Martins A."/>
            <person name="Bongiorno P."/>
            <person name="Glickman M."/>
            <person name="Shuman S."/>
        </authorList>
    </citation>
    <scope>FUNCTION</scope>
    <scope>COFACTOR</scope>
    <scope>ACTIVITY REGULATION</scope>
    <scope>BIOPHYSICOCHEMICAL PROPERTIES</scope>
    <scope>SUBUNIT</scope>
    <source>
        <strain>ATCC 25618 / H37Rv</strain>
    </source>
</reference>
<reference key="3">
    <citation type="journal article" date="2011" name="Mol. Cell. Proteomics">
        <title>Proteogenomic analysis of Mycobacterium tuberculosis by high resolution mass spectrometry.</title>
        <authorList>
            <person name="Kelkar D.S."/>
            <person name="Kumar D."/>
            <person name="Kumar P."/>
            <person name="Balakrishnan L."/>
            <person name="Muthusamy B."/>
            <person name="Yadav A.K."/>
            <person name="Shrivastava P."/>
            <person name="Marimuthu A."/>
            <person name="Anand S."/>
            <person name="Sundaram H."/>
            <person name="Kingsbury R."/>
            <person name="Harsha H.C."/>
            <person name="Nair B."/>
            <person name="Prasad T.S."/>
            <person name="Chauhan D.S."/>
            <person name="Katoch K."/>
            <person name="Katoch V.M."/>
            <person name="Kumar P."/>
            <person name="Chaerkady R."/>
            <person name="Ramachandran S."/>
            <person name="Dash D."/>
            <person name="Pandey A."/>
        </authorList>
    </citation>
    <scope>IDENTIFICATION BY MASS SPECTROMETRY [LARGE SCALE ANALYSIS]</scope>
    <source>
        <strain>ATCC 25618 / H37Rv</strain>
    </source>
</reference>
<reference key="4">
    <citation type="journal article" date="2005" name="J. Biol. Chem.">
        <title>NAD+-dependent DNA Ligase (Rv3014c) from Mycobacterium tuberculosis. Crystal structure of the adenylation domain and identification of novel inhibitors.</title>
        <authorList>
            <person name="Srivastava S.K."/>
            <person name="Tripathi R.P."/>
            <person name="Ramachandran R."/>
        </authorList>
    </citation>
    <scope>X-RAY CRYSTALLOGRAPHY (3.15 ANGSTROMS) OF 1-328 IN COMPLEX WITH AMP</scope>
    <scope>CATALYTIC ACTIVITY</scope>
    <scope>COFACTOR</scope>
</reference>
<feature type="chain" id="PRO_0000161752" description="DNA ligase A">
    <location>
        <begin position="1"/>
        <end position="691"/>
    </location>
</feature>
<feature type="domain" description="BRCT" evidence="1">
    <location>
        <begin position="607"/>
        <end position="691"/>
    </location>
</feature>
<feature type="active site" description="N6-AMP-lysine intermediate" evidence="1">
    <location>
        <position position="123"/>
    </location>
</feature>
<feature type="binding site" evidence="1">
    <location>
        <begin position="41"/>
        <end position="45"/>
    </location>
    <ligand>
        <name>NAD(+)</name>
        <dbReference type="ChEBI" id="CHEBI:57540"/>
    </ligand>
</feature>
<feature type="binding site" evidence="1 4">
    <location>
        <begin position="91"/>
        <end position="92"/>
    </location>
    <ligand>
        <name>NAD(+)</name>
        <dbReference type="ChEBI" id="CHEBI:57540"/>
    </ligand>
</feature>
<feature type="binding site" evidence="1">
    <location>
        <position position="121"/>
    </location>
    <ligand>
        <name>NAD(+)</name>
        <dbReference type="ChEBI" id="CHEBI:57540"/>
    </ligand>
</feature>
<feature type="binding site" evidence="1 4">
    <location>
        <position position="144"/>
    </location>
    <ligand>
        <name>NAD(+)</name>
        <dbReference type="ChEBI" id="CHEBI:57540"/>
    </ligand>
</feature>
<feature type="binding site" evidence="1 4">
    <location>
        <position position="184"/>
    </location>
    <ligand>
        <name>NAD(+)</name>
        <dbReference type="ChEBI" id="CHEBI:57540"/>
    </ligand>
</feature>
<feature type="binding site" evidence="1 4">
    <location>
        <position position="300"/>
    </location>
    <ligand>
        <name>NAD(+)</name>
        <dbReference type="ChEBI" id="CHEBI:57540"/>
    </ligand>
</feature>
<feature type="binding site" evidence="1">
    <location>
        <position position="324"/>
    </location>
    <ligand>
        <name>NAD(+)</name>
        <dbReference type="ChEBI" id="CHEBI:57540"/>
    </ligand>
</feature>
<feature type="binding site" evidence="1">
    <location>
        <position position="418"/>
    </location>
    <ligand>
        <name>Zn(2+)</name>
        <dbReference type="ChEBI" id="CHEBI:29105"/>
    </ligand>
</feature>
<feature type="binding site" evidence="1">
    <location>
        <position position="421"/>
    </location>
    <ligand>
        <name>Zn(2+)</name>
        <dbReference type="ChEBI" id="CHEBI:29105"/>
    </ligand>
</feature>
<feature type="binding site" evidence="1">
    <location>
        <position position="437"/>
    </location>
    <ligand>
        <name>Zn(2+)</name>
        <dbReference type="ChEBI" id="CHEBI:29105"/>
    </ligand>
</feature>
<feature type="binding site" evidence="1">
    <location>
        <position position="443"/>
    </location>
    <ligand>
        <name>Zn(2+)</name>
        <dbReference type="ChEBI" id="CHEBI:29105"/>
    </ligand>
</feature>
<feature type="helix" evidence="8">
    <location>
        <begin position="10"/>
        <end position="32"/>
    </location>
</feature>
<feature type="helix" evidence="8">
    <location>
        <begin position="41"/>
        <end position="57"/>
    </location>
</feature>
<feature type="helix" evidence="8">
    <location>
        <begin position="59"/>
        <end position="61"/>
    </location>
</feature>
<feature type="helix" evidence="8">
    <location>
        <begin position="67"/>
        <end position="69"/>
    </location>
</feature>
<feature type="turn" evidence="8">
    <location>
        <begin position="72"/>
        <end position="75"/>
    </location>
</feature>
<feature type="strand" evidence="6">
    <location>
        <begin position="77"/>
        <end position="79"/>
    </location>
</feature>
<feature type="strand" evidence="8">
    <location>
        <begin position="82"/>
        <end position="84"/>
    </location>
</feature>
<feature type="strand" evidence="7">
    <location>
        <begin position="93"/>
        <end position="95"/>
    </location>
</feature>
<feature type="helix" evidence="8">
    <location>
        <begin position="98"/>
        <end position="112"/>
    </location>
</feature>
<feature type="helix" evidence="8">
    <location>
        <begin position="113"/>
        <end position="115"/>
    </location>
</feature>
<feature type="strand" evidence="8">
    <location>
        <begin position="118"/>
        <end position="124"/>
    </location>
</feature>
<feature type="strand" evidence="8">
    <location>
        <begin position="126"/>
        <end position="134"/>
    </location>
</feature>
<feature type="strand" evidence="8">
    <location>
        <begin position="137"/>
        <end position="142"/>
    </location>
</feature>
<feature type="strand" evidence="8">
    <location>
        <begin position="147"/>
        <end position="152"/>
    </location>
</feature>
<feature type="helix" evidence="8">
    <location>
        <begin position="154"/>
        <end position="158"/>
    </location>
</feature>
<feature type="strand" evidence="5">
    <location>
        <begin position="160"/>
        <end position="162"/>
    </location>
</feature>
<feature type="strand" evidence="8">
    <location>
        <begin position="171"/>
        <end position="173"/>
    </location>
</feature>
<feature type="strand" evidence="8">
    <location>
        <begin position="177"/>
        <end position="186"/>
    </location>
</feature>
<feature type="helix" evidence="8">
    <location>
        <begin position="189"/>
        <end position="201"/>
    </location>
</feature>
<feature type="helix" evidence="8">
    <location>
        <begin position="210"/>
        <end position="218"/>
    </location>
</feature>
<feature type="helix" evidence="8">
    <location>
        <begin position="223"/>
        <end position="227"/>
    </location>
</feature>
<feature type="strand" evidence="8">
    <location>
        <begin position="232"/>
        <end position="243"/>
    </location>
</feature>
<feature type="helix" evidence="8">
    <location>
        <begin position="249"/>
        <end position="258"/>
    </location>
</feature>
<feature type="strand" evidence="8">
    <location>
        <begin position="268"/>
        <end position="272"/>
    </location>
</feature>
<feature type="helix" evidence="8">
    <location>
        <begin position="273"/>
        <end position="286"/>
    </location>
</feature>
<feature type="helix" evidence="8">
    <location>
        <begin position="287"/>
        <end position="289"/>
    </location>
</feature>
<feature type="strand" evidence="8">
    <location>
        <begin position="290"/>
        <end position="292"/>
    </location>
</feature>
<feature type="strand" evidence="8">
    <location>
        <begin position="294"/>
        <end position="301"/>
    </location>
</feature>
<feature type="helix" evidence="8">
    <location>
        <begin position="304"/>
        <end position="310"/>
    </location>
</feature>
<feature type="strand" evidence="8">
    <location>
        <begin position="314"/>
        <end position="324"/>
    </location>
</feature>
<feature type="strand" evidence="6">
    <location>
        <begin position="328"/>
        <end position="333"/>
    </location>
</feature>
<feature type="strand" evidence="6">
    <location>
        <begin position="343"/>
        <end position="345"/>
    </location>
</feature>
<feature type="strand" evidence="6">
    <location>
        <begin position="350"/>
        <end position="352"/>
    </location>
</feature>
<feature type="strand" evidence="6">
    <location>
        <begin position="359"/>
        <end position="363"/>
    </location>
</feature>
<feature type="turn" evidence="6">
    <location>
        <begin position="371"/>
        <end position="377"/>
    </location>
</feature>
<feature type="strand" evidence="6">
    <location>
        <begin position="384"/>
        <end position="388"/>
    </location>
</feature>
<feature type="strand" evidence="6">
    <location>
        <begin position="391"/>
        <end position="394"/>
    </location>
</feature>
<protein>
    <recommendedName>
        <fullName evidence="1">DNA ligase A</fullName>
        <shortName>LigA</shortName>
        <ecNumber evidence="1">6.5.1.2</ecNumber>
    </recommendedName>
    <alternativeName>
        <fullName evidence="1">Polydeoxyribonucleotide synthase [NAD(+)]</fullName>
    </alternativeName>
</protein>
<gene>
    <name evidence="1" type="primary">ligA</name>
    <name type="synonym">lig</name>
    <name type="ordered locus">Rv3014c</name>
    <name type="ORF">MTV012.28c</name>
</gene>
<accession>P9WNV1</accession>
<accession>L0TBA8</accession>
<accession>O53261</accession>
<accession>P63973</accession>
<sequence>MSSPDADQTAPEVLRQWQALAEEVREHQFRYYVRDAPIISDAEFDELLRRLEALEEQHPELRTPDSPTQLVGGAGFATDFEPVDHLERMLSLDNAFTADELAAWAGRIHAEVGDAAHYLCELKIDGVALSLVYREGRLTRASTRGDGRTGEDVTLNARTIADVPERLTPGDDYPVPEVLEVRGEVFFRLDDFQALNASLVEEGKAPFANPRNSAAGSLRQKDPAVTARRRLRMICHGLGHVEGFRPATLHQAYLALRAWGLPVSEHTTLATDLAGVRERIDYWGEHRHEVDHEIDGVVVKVDEVALQRRLGSTSRAPRWAIAYKYPPEEAQTKLLDIRVNVGRTGRITPFAFMTPVKVAGSTVGQATLHNASEIKRKGVLIGDTVVIRKAGDVIPEVLGPVVELRDGSEREFIMPTTCPECGSPLAPEKEGDADIRCPNARGCPGQLRERVFHVASRNGLDIEVLGYEAGVALLQAKVIADEGELFALTERDLLRTDLFRTKAGELSANGKRLLVNLDKAKAAPLWRVLVALSIRHVGPTAARALATEFGSLDAIAAASTDQLAAVEGVGPTIAAAVTEWFAVDWHREIVDKWRAAGVRMVDERDESVPRTLAGLTIVVTGSLTGFSRDDAKEAIVARGGKAAGSVSKKTNYVVAGDSPGSKYDKAVELGVPILDEDGFRRLLADGPASRT</sequence>